<accession>B8ZS02</accession>
<proteinExistence type="inferred from homology"/>
<name>UNG_MYCLB</name>
<gene>
    <name evidence="1" type="primary">ung</name>
    <name type="ordered locus">MLBr01675</name>
</gene>
<sequence>MTARPLSELVEQGWAAALEPVVDQVAEMGRFLRAEIAAGRRYLPAGHSVLRAFTYPFDNVRVLIVGQDPYPTPGHAVGLSFSVAPDVRPLPRSLANVFDEYTADLGYPLPVCGDLTPWAQRGVLLLNRVLTVRPSNPASHRGKGWEVITECAIRALAARSEPMVAILWGRDAATLKPLLTVDNCVVIESPHPSPLSASRGFFGSRPFSRTNEILVGMGAGPINWRLP</sequence>
<keyword id="KW-0963">Cytoplasm</keyword>
<keyword id="KW-0227">DNA damage</keyword>
<keyword id="KW-0234">DNA repair</keyword>
<keyword id="KW-0378">Hydrolase</keyword>
<comment type="function">
    <text evidence="1">Excises uracil residues from the DNA which can arise as a result of misincorporation of dUMP residues by DNA polymerase or due to deamination of cytosine.</text>
</comment>
<comment type="catalytic activity">
    <reaction evidence="1">
        <text>Hydrolyzes single-stranded DNA or mismatched double-stranded DNA and polynucleotides, releasing free uracil.</text>
        <dbReference type="EC" id="3.2.2.27"/>
    </reaction>
</comment>
<comment type="subcellular location">
    <subcellularLocation>
        <location evidence="1">Cytoplasm</location>
    </subcellularLocation>
</comment>
<comment type="similarity">
    <text evidence="1">Belongs to the uracil-DNA glycosylase (UDG) superfamily. UNG family.</text>
</comment>
<dbReference type="EC" id="3.2.2.27" evidence="1"/>
<dbReference type="EMBL" id="FM211192">
    <property type="protein sequence ID" value="CAR71770.1"/>
    <property type="molecule type" value="Genomic_DNA"/>
</dbReference>
<dbReference type="SMR" id="B8ZS02"/>
<dbReference type="KEGG" id="mlb:MLBr01675"/>
<dbReference type="HOGENOM" id="CLU_032162_3_1_11"/>
<dbReference type="Proteomes" id="UP000006900">
    <property type="component" value="Chromosome"/>
</dbReference>
<dbReference type="GO" id="GO:0005737">
    <property type="term" value="C:cytoplasm"/>
    <property type="evidence" value="ECO:0007669"/>
    <property type="project" value="UniProtKB-SubCell"/>
</dbReference>
<dbReference type="GO" id="GO:0004844">
    <property type="term" value="F:uracil DNA N-glycosylase activity"/>
    <property type="evidence" value="ECO:0007669"/>
    <property type="project" value="UniProtKB-UniRule"/>
</dbReference>
<dbReference type="GO" id="GO:0097510">
    <property type="term" value="P:base-excision repair, AP site formation via deaminated base removal"/>
    <property type="evidence" value="ECO:0007669"/>
    <property type="project" value="TreeGrafter"/>
</dbReference>
<dbReference type="CDD" id="cd10027">
    <property type="entry name" value="UDG-F1-like"/>
    <property type="match status" value="1"/>
</dbReference>
<dbReference type="FunFam" id="3.40.470.10:FF:000006">
    <property type="entry name" value="Uracil-DNA glycosylase"/>
    <property type="match status" value="1"/>
</dbReference>
<dbReference type="Gene3D" id="3.40.470.10">
    <property type="entry name" value="Uracil-DNA glycosylase-like domain"/>
    <property type="match status" value="1"/>
</dbReference>
<dbReference type="HAMAP" id="MF_00148">
    <property type="entry name" value="UDG"/>
    <property type="match status" value="1"/>
</dbReference>
<dbReference type="InterPro" id="IPR002043">
    <property type="entry name" value="UDG_fam1"/>
</dbReference>
<dbReference type="InterPro" id="IPR018085">
    <property type="entry name" value="Ura-DNA_Glyclase_AS"/>
</dbReference>
<dbReference type="InterPro" id="IPR005122">
    <property type="entry name" value="Uracil-DNA_glycosylase-like"/>
</dbReference>
<dbReference type="InterPro" id="IPR036895">
    <property type="entry name" value="Uracil-DNA_glycosylase-like_sf"/>
</dbReference>
<dbReference type="NCBIfam" id="NF003588">
    <property type="entry name" value="PRK05254.1-1"/>
    <property type="match status" value="1"/>
</dbReference>
<dbReference type="NCBIfam" id="NF003592">
    <property type="entry name" value="PRK05254.1-5"/>
    <property type="match status" value="1"/>
</dbReference>
<dbReference type="NCBIfam" id="TIGR00628">
    <property type="entry name" value="ung"/>
    <property type="match status" value="1"/>
</dbReference>
<dbReference type="PANTHER" id="PTHR11264">
    <property type="entry name" value="URACIL-DNA GLYCOSYLASE"/>
    <property type="match status" value="1"/>
</dbReference>
<dbReference type="PANTHER" id="PTHR11264:SF0">
    <property type="entry name" value="URACIL-DNA GLYCOSYLASE"/>
    <property type="match status" value="1"/>
</dbReference>
<dbReference type="Pfam" id="PF03167">
    <property type="entry name" value="UDG"/>
    <property type="match status" value="1"/>
</dbReference>
<dbReference type="SMART" id="SM00986">
    <property type="entry name" value="UDG"/>
    <property type="match status" value="1"/>
</dbReference>
<dbReference type="SMART" id="SM00987">
    <property type="entry name" value="UreE_C"/>
    <property type="match status" value="1"/>
</dbReference>
<dbReference type="SUPFAM" id="SSF52141">
    <property type="entry name" value="Uracil-DNA glycosylase-like"/>
    <property type="match status" value="1"/>
</dbReference>
<dbReference type="PROSITE" id="PS00130">
    <property type="entry name" value="U_DNA_GLYCOSYLASE"/>
    <property type="match status" value="1"/>
</dbReference>
<organism>
    <name type="scientific">Mycobacterium leprae (strain Br4923)</name>
    <dbReference type="NCBI Taxonomy" id="561304"/>
    <lineage>
        <taxon>Bacteria</taxon>
        <taxon>Bacillati</taxon>
        <taxon>Actinomycetota</taxon>
        <taxon>Actinomycetes</taxon>
        <taxon>Mycobacteriales</taxon>
        <taxon>Mycobacteriaceae</taxon>
        <taxon>Mycobacterium</taxon>
    </lineage>
</organism>
<protein>
    <recommendedName>
        <fullName evidence="1">Uracil-DNA glycosylase</fullName>
        <shortName evidence="1">UDG</shortName>
        <ecNumber evidence="1">3.2.2.27</ecNumber>
    </recommendedName>
</protein>
<evidence type="ECO:0000255" key="1">
    <source>
        <dbReference type="HAMAP-Rule" id="MF_00148"/>
    </source>
</evidence>
<reference key="1">
    <citation type="journal article" date="2009" name="Nat. Genet.">
        <title>Comparative genomic and phylogeographic analysis of Mycobacterium leprae.</title>
        <authorList>
            <person name="Monot M."/>
            <person name="Honore N."/>
            <person name="Garnier T."/>
            <person name="Zidane N."/>
            <person name="Sherafi D."/>
            <person name="Paniz-Mondolfi A."/>
            <person name="Matsuoka M."/>
            <person name="Taylor G.M."/>
            <person name="Donoghue H.D."/>
            <person name="Bouwman A."/>
            <person name="Mays S."/>
            <person name="Watson C."/>
            <person name="Lockwood D."/>
            <person name="Khamispour A."/>
            <person name="Dowlati Y."/>
            <person name="Jianping S."/>
            <person name="Rea T.H."/>
            <person name="Vera-Cabrera L."/>
            <person name="Stefani M.M."/>
            <person name="Banu S."/>
            <person name="Macdonald M."/>
            <person name="Sapkota B.R."/>
            <person name="Spencer J.S."/>
            <person name="Thomas J."/>
            <person name="Harshman K."/>
            <person name="Singh P."/>
            <person name="Busso P."/>
            <person name="Gattiker A."/>
            <person name="Rougemont J."/>
            <person name="Brennan P.J."/>
            <person name="Cole S.T."/>
        </authorList>
    </citation>
    <scope>NUCLEOTIDE SEQUENCE [LARGE SCALE GENOMIC DNA]</scope>
    <source>
        <strain>Br4923</strain>
    </source>
</reference>
<feature type="chain" id="PRO_1000199789" description="Uracil-DNA glycosylase">
    <location>
        <begin position="1"/>
        <end position="227"/>
    </location>
</feature>
<feature type="active site" description="Proton acceptor" evidence="1">
    <location>
        <position position="68"/>
    </location>
</feature>